<evidence type="ECO:0000255" key="1">
    <source>
        <dbReference type="HAMAP-Rule" id="MF_00034"/>
    </source>
</evidence>
<reference key="1">
    <citation type="journal article" date="2008" name="J. Bacteriol.">
        <title>The pangenome structure of Escherichia coli: comparative genomic analysis of E. coli commensal and pathogenic isolates.</title>
        <authorList>
            <person name="Rasko D.A."/>
            <person name="Rosovitz M.J."/>
            <person name="Myers G.S.A."/>
            <person name="Mongodin E.F."/>
            <person name="Fricke W.F."/>
            <person name="Gajer P."/>
            <person name="Crabtree J."/>
            <person name="Sebaihia M."/>
            <person name="Thomson N.R."/>
            <person name="Chaudhuri R."/>
            <person name="Henderson I.R."/>
            <person name="Sperandio V."/>
            <person name="Ravel J."/>
        </authorList>
    </citation>
    <scope>NUCLEOTIDE SEQUENCE [LARGE SCALE GENOMIC DNA]</scope>
    <source>
        <strain>HS</strain>
    </source>
</reference>
<keyword id="KW-0963">Cytoplasm</keyword>
<keyword id="KW-0227">DNA damage</keyword>
<keyword id="KW-0233">DNA recombination</keyword>
<keyword id="KW-0234">DNA repair</keyword>
<keyword id="KW-0238">DNA-binding</keyword>
<keyword id="KW-0255">Endonuclease</keyword>
<keyword id="KW-0378">Hydrolase</keyword>
<keyword id="KW-0460">Magnesium</keyword>
<keyword id="KW-0479">Metal-binding</keyword>
<keyword id="KW-0540">Nuclease</keyword>
<sequence>MAIILGIDPGSRVTGYGVIRQVGRQLSYLGSGCIRTKVDDLPSRLKLIYAGVTEIITQFQPDYFAIEQVFMAKNADSALKLGQARGVAIVAAVNQELPVFEYAARQVKQTVVGIGSAEKSQVQHMVRTLLKLPANPQADAADALAIAITHCHVSQNAMQMSESRLNLARGRLR</sequence>
<proteinExistence type="inferred from homology"/>
<organism>
    <name type="scientific">Escherichia coli O9:H4 (strain HS)</name>
    <dbReference type="NCBI Taxonomy" id="331112"/>
    <lineage>
        <taxon>Bacteria</taxon>
        <taxon>Pseudomonadati</taxon>
        <taxon>Pseudomonadota</taxon>
        <taxon>Gammaproteobacteria</taxon>
        <taxon>Enterobacterales</taxon>
        <taxon>Enterobacteriaceae</taxon>
        <taxon>Escherichia</taxon>
    </lineage>
</organism>
<protein>
    <recommendedName>
        <fullName evidence="1">Crossover junction endodeoxyribonuclease RuvC</fullName>
        <ecNumber evidence="1">3.1.21.10</ecNumber>
    </recommendedName>
    <alternativeName>
        <fullName evidence="1">Holliday junction nuclease RuvC</fullName>
    </alternativeName>
    <alternativeName>
        <fullName evidence="1">Holliday junction resolvase RuvC</fullName>
    </alternativeName>
</protein>
<accession>A8A163</accession>
<name>RUVC_ECOHS</name>
<dbReference type="EC" id="3.1.21.10" evidence="1"/>
<dbReference type="EMBL" id="CP000802">
    <property type="protein sequence ID" value="ABV06267.1"/>
    <property type="molecule type" value="Genomic_DNA"/>
</dbReference>
<dbReference type="RefSeq" id="WP_001295503.1">
    <property type="nucleotide sequence ID" value="NC_009800.1"/>
</dbReference>
<dbReference type="SMR" id="A8A163"/>
<dbReference type="GeneID" id="89516631"/>
<dbReference type="KEGG" id="ecx:EcHS_A1956"/>
<dbReference type="HOGENOM" id="CLU_091257_2_1_6"/>
<dbReference type="GO" id="GO:0005737">
    <property type="term" value="C:cytoplasm"/>
    <property type="evidence" value="ECO:0007669"/>
    <property type="project" value="UniProtKB-SubCell"/>
</dbReference>
<dbReference type="GO" id="GO:0048476">
    <property type="term" value="C:Holliday junction resolvase complex"/>
    <property type="evidence" value="ECO:0007669"/>
    <property type="project" value="UniProtKB-UniRule"/>
</dbReference>
<dbReference type="GO" id="GO:0008821">
    <property type="term" value="F:crossover junction DNA endonuclease activity"/>
    <property type="evidence" value="ECO:0007669"/>
    <property type="project" value="UniProtKB-UniRule"/>
</dbReference>
<dbReference type="GO" id="GO:0003677">
    <property type="term" value="F:DNA binding"/>
    <property type="evidence" value="ECO:0007669"/>
    <property type="project" value="UniProtKB-KW"/>
</dbReference>
<dbReference type="GO" id="GO:0000287">
    <property type="term" value="F:magnesium ion binding"/>
    <property type="evidence" value="ECO:0007669"/>
    <property type="project" value="UniProtKB-UniRule"/>
</dbReference>
<dbReference type="GO" id="GO:0006310">
    <property type="term" value="P:DNA recombination"/>
    <property type="evidence" value="ECO:0007669"/>
    <property type="project" value="UniProtKB-UniRule"/>
</dbReference>
<dbReference type="GO" id="GO:0006281">
    <property type="term" value="P:DNA repair"/>
    <property type="evidence" value="ECO:0007669"/>
    <property type="project" value="UniProtKB-UniRule"/>
</dbReference>
<dbReference type="CDD" id="cd16962">
    <property type="entry name" value="RuvC"/>
    <property type="match status" value="1"/>
</dbReference>
<dbReference type="FunFam" id="3.30.420.10:FF:000002">
    <property type="entry name" value="Crossover junction endodeoxyribonuclease RuvC"/>
    <property type="match status" value="1"/>
</dbReference>
<dbReference type="Gene3D" id="3.30.420.10">
    <property type="entry name" value="Ribonuclease H-like superfamily/Ribonuclease H"/>
    <property type="match status" value="1"/>
</dbReference>
<dbReference type="HAMAP" id="MF_00034">
    <property type="entry name" value="RuvC"/>
    <property type="match status" value="1"/>
</dbReference>
<dbReference type="InterPro" id="IPR012337">
    <property type="entry name" value="RNaseH-like_sf"/>
</dbReference>
<dbReference type="InterPro" id="IPR036397">
    <property type="entry name" value="RNaseH_sf"/>
</dbReference>
<dbReference type="InterPro" id="IPR020563">
    <property type="entry name" value="X-over_junc_endoDNase_Mg_BS"/>
</dbReference>
<dbReference type="InterPro" id="IPR002176">
    <property type="entry name" value="X-over_junc_endoDNase_RuvC"/>
</dbReference>
<dbReference type="NCBIfam" id="NF000711">
    <property type="entry name" value="PRK00039.2-1"/>
    <property type="match status" value="1"/>
</dbReference>
<dbReference type="NCBIfam" id="TIGR00228">
    <property type="entry name" value="ruvC"/>
    <property type="match status" value="1"/>
</dbReference>
<dbReference type="PANTHER" id="PTHR30194">
    <property type="entry name" value="CROSSOVER JUNCTION ENDODEOXYRIBONUCLEASE RUVC"/>
    <property type="match status" value="1"/>
</dbReference>
<dbReference type="PANTHER" id="PTHR30194:SF3">
    <property type="entry name" value="CROSSOVER JUNCTION ENDODEOXYRIBONUCLEASE RUVC"/>
    <property type="match status" value="1"/>
</dbReference>
<dbReference type="Pfam" id="PF02075">
    <property type="entry name" value="RuvC"/>
    <property type="match status" value="1"/>
</dbReference>
<dbReference type="PRINTS" id="PR00696">
    <property type="entry name" value="RSOLVASERUVC"/>
</dbReference>
<dbReference type="SUPFAM" id="SSF53098">
    <property type="entry name" value="Ribonuclease H-like"/>
    <property type="match status" value="1"/>
</dbReference>
<dbReference type="PROSITE" id="PS01321">
    <property type="entry name" value="RUVC"/>
    <property type="match status" value="1"/>
</dbReference>
<gene>
    <name evidence="1" type="primary">ruvC</name>
    <name type="ordered locus">EcHS_A1956</name>
</gene>
<feature type="chain" id="PRO_1000057265" description="Crossover junction endodeoxyribonuclease RuvC">
    <location>
        <begin position="1"/>
        <end position="173"/>
    </location>
</feature>
<feature type="active site" evidence="1">
    <location>
        <position position="8"/>
    </location>
</feature>
<feature type="active site" evidence="1">
    <location>
        <position position="67"/>
    </location>
</feature>
<feature type="active site" evidence="1">
    <location>
        <position position="139"/>
    </location>
</feature>
<feature type="binding site" evidence="1">
    <location>
        <position position="8"/>
    </location>
    <ligand>
        <name>Mg(2+)</name>
        <dbReference type="ChEBI" id="CHEBI:18420"/>
        <label>1</label>
    </ligand>
</feature>
<feature type="binding site" evidence="1">
    <location>
        <position position="67"/>
    </location>
    <ligand>
        <name>Mg(2+)</name>
        <dbReference type="ChEBI" id="CHEBI:18420"/>
        <label>2</label>
    </ligand>
</feature>
<feature type="binding site" evidence="1">
    <location>
        <position position="139"/>
    </location>
    <ligand>
        <name>Mg(2+)</name>
        <dbReference type="ChEBI" id="CHEBI:18420"/>
        <label>1</label>
    </ligand>
</feature>
<comment type="function">
    <text evidence="1">The RuvA-RuvB-RuvC complex processes Holliday junction (HJ) DNA during genetic recombination and DNA repair. Endonuclease that resolves HJ intermediates. Cleaves cruciform DNA by making single-stranded nicks across the HJ at symmetrical positions within the homologous arms, yielding a 5'-phosphate and a 3'-hydroxyl group; requires a central core of homology in the junction. The consensus cleavage sequence is 5'-(A/T)TT(C/G)-3'. Cleavage occurs on the 3'-side of the TT dinucleotide at the point of strand exchange. HJ branch migration catalyzed by RuvA-RuvB allows RuvC to scan DNA until it finds its consensus sequence, where it cleaves and resolves the cruciform DNA.</text>
</comment>
<comment type="catalytic activity">
    <reaction evidence="1">
        <text>Endonucleolytic cleavage at a junction such as a reciprocal single-stranded crossover between two homologous DNA duplexes (Holliday junction).</text>
        <dbReference type="EC" id="3.1.21.10"/>
    </reaction>
</comment>
<comment type="cofactor">
    <cofactor evidence="1">
        <name>Mg(2+)</name>
        <dbReference type="ChEBI" id="CHEBI:18420"/>
    </cofactor>
    <text evidence="1">Binds 2 Mg(2+) ion per subunit.</text>
</comment>
<comment type="subunit">
    <text evidence="1">Homodimer which binds Holliday junction (HJ) DNA. The HJ becomes 2-fold symmetrical on binding to RuvC with unstacked arms; it has a different conformation from HJ DNA in complex with RuvA. In the full resolvosome a probable DNA-RuvA(4)-RuvB(12)-RuvC(2) complex forms which resolves the HJ.</text>
</comment>
<comment type="subcellular location">
    <subcellularLocation>
        <location evidence="1">Cytoplasm</location>
    </subcellularLocation>
</comment>
<comment type="similarity">
    <text evidence="1">Belongs to the RuvC family.</text>
</comment>